<gene>
    <name evidence="1" type="primary">rsmA</name>
    <name evidence="1" type="synonym">ksgA</name>
    <name type="ordered locus">BPEN_130</name>
</gene>
<dbReference type="EC" id="2.1.1.182" evidence="1"/>
<dbReference type="EMBL" id="CP000016">
    <property type="protein sequence ID" value="AAZ40770.1"/>
    <property type="molecule type" value="Genomic_DNA"/>
</dbReference>
<dbReference type="RefSeq" id="WP_011282677.1">
    <property type="nucleotide sequence ID" value="NC_007292.1"/>
</dbReference>
<dbReference type="SMR" id="Q493R7"/>
<dbReference type="STRING" id="291272.BPEN_130"/>
<dbReference type="KEGG" id="bpn:BPEN_130"/>
<dbReference type="eggNOG" id="COG0030">
    <property type="taxonomic scope" value="Bacteria"/>
</dbReference>
<dbReference type="HOGENOM" id="CLU_041220_0_1_6"/>
<dbReference type="OrthoDB" id="9814755at2"/>
<dbReference type="Proteomes" id="UP000007794">
    <property type="component" value="Chromosome"/>
</dbReference>
<dbReference type="GO" id="GO:0005829">
    <property type="term" value="C:cytosol"/>
    <property type="evidence" value="ECO:0007669"/>
    <property type="project" value="TreeGrafter"/>
</dbReference>
<dbReference type="GO" id="GO:0052908">
    <property type="term" value="F:16S rRNA (adenine(1518)-N(6)/adenine(1519)-N(6))-dimethyltransferase activity"/>
    <property type="evidence" value="ECO:0007669"/>
    <property type="project" value="UniProtKB-EC"/>
</dbReference>
<dbReference type="GO" id="GO:0003723">
    <property type="term" value="F:RNA binding"/>
    <property type="evidence" value="ECO:0007669"/>
    <property type="project" value="UniProtKB-KW"/>
</dbReference>
<dbReference type="FunFam" id="1.10.8.100:FF:000001">
    <property type="entry name" value="Ribosomal RNA small subunit methyltransferase A"/>
    <property type="match status" value="1"/>
</dbReference>
<dbReference type="Gene3D" id="1.10.8.100">
    <property type="entry name" value="Ribosomal RNA adenine dimethylase-like, domain 2"/>
    <property type="match status" value="1"/>
</dbReference>
<dbReference type="Gene3D" id="3.40.50.150">
    <property type="entry name" value="Vaccinia Virus protein VP39"/>
    <property type="match status" value="1"/>
</dbReference>
<dbReference type="HAMAP" id="MF_00607">
    <property type="entry name" value="16SrRNA_methyltr_A"/>
    <property type="match status" value="1"/>
</dbReference>
<dbReference type="InterPro" id="IPR001737">
    <property type="entry name" value="KsgA/Erm"/>
</dbReference>
<dbReference type="InterPro" id="IPR023165">
    <property type="entry name" value="rRNA_Ade_diMease-like_C"/>
</dbReference>
<dbReference type="InterPro" id="IPR020596">
    <property type="entry name" value="rRNA_Ade_Mease_Trfase_CS"/>
</dbReference>
<dbReference type="InterPro" id="IPR020598">
    <property type="entry name" value="rRNA_Ade_methylase_Trfase_N"/>
</dbReference>
<dbReference type="InterPro" id="IPR011530">
    <property type="entry name" value="rRNA_adenine_dimethylase"/>
</dbReference>
<dbReference type="InterPro" id="IPR029063">
    <property type="entry name" value="SAM-dependent_MTases_sf"/>
</dbReference>
<dbReference type="NCBIfam" id="TIGR00755">
    <property type="entry name" value="ksgA"/>
    <property type="match status" value="1"/>
</dbReference>
<dbReference type="PANTHER" id="PTHR11727">
    <property type="entry name" value="DIMETHYLADENOSINE TRANSFERASE"/>
    <property type="match status" value="1"/>
</dbReference>
<dbReference type="PANTHER" id="PTHR11727:SF7">
    <property type="entry name" value="DIMETHYLADENOSINE TRANSFERASE-RELATED"/>
    <property type="match status" value="1"/>
</dbReference>
<dbReference type="Pfam" id="PF00398">
    <property type="entry name" value="RrnaAD"/>
    <property type="match status" value="1"/>
</dbReference>
<dbReference type="SMART" id="SM00650">
    <property type="entry name" value="rADc"/>
    <property type="match status" value="1"/>
</dbReference>
<dbReference type="SUPFAM" id="SSF53335">
    <property type="entry name" value="S-adenosyl-L-methionine-dependent methyltransferases"/>
    <property type="match status" value="1"/>
</dbReference>
<dbReference type="PROSITE" id="PS01131">
    <property type="entry name" value="RRNA_A_DIMETH"/>
    <property type="match status" value="1"/>
</dbReference>
<dbReference type="PROSITE" id="PS51689">
    <property type="entry name" value="SAM_RNA_A_N6_MT"/>
    <property type="match status" value="1"/>
</dbReference>
<feature type="chain" id="PRO_0000271903" description="Ribosomal RNA small subunit methyltransferase A">
    <location>
        <begin position="1"/>
        <end position="267"/>
    </location>
</feature>
<feature type="binding site" evidence="1">
    <location>
        <position position="20"/>
    </location>
    <ligand>
        <name>S-adenosyl-L-methionine</name>
        <dbReference type="ChEBI" id="CHEBI:59789"/>
    </ligand>
</feature>
<feature type="binding site" evidence="1">
    <location>
        <position position="45"/>
    </location>
    <ligand>
        <name>S-adenosyl-L-methionine</name>
        <dbReference type="ChEBI" id="CHEBI:59789"/>
    </ligand>
</feature>
<feature type="binding site" evidence="1">
    <location>
        <position position="68"/>
    </location>
    <ligand>
        <name>S-adenosyl-L-methionine</name>
        <dbReference type="ChEBI" id="CHEBI:59789"/>
    </ligand>
</feature>
<feature type="binding site" evidence="1">
    <location>
        <position position="91"/>
    </location>
    <ligand>
        <name>S-adenosyl-L-methionine</name>
        <dbReference type="ChEBI" id="CHEBI:59789"/>
    </ligand>
</feature>
<feature type="binding site" evidence="1">
    <location>
        <position position="113"/>
    </location>
    <ligand>
        <name>S-adenosyl-L-methionine</name>
        <dbReference type="ChEBI" id="CHEBI:59789"/>
    </ligand>
</feature>
<sequence>MKKIYYKNHLIKKKWSQVFLKDQNVIDTIVKTINPKKHQKILEIGPGLGALTKQILNIADLDSLILIERDSNLVNRLVQMFNKKINILHQDIMTTNFFDLSHKVGQKLRLIGNLPYNIATELIVYLFQYTNVIYDMHFMFQKEVATRLYANPNKKEYGRLSIITQYHCKVVPLLTIPATSFFPIPKVESMVMRLLPHTNTPYPIVNIGKLSSLTKLAFRQRRKTLRNSLSTFFNETEITQKGINPALRAENITINQYCTLANMLNNK</sequence>
<accession>Q493R7</accession>
<organism>
    <name type="scientific">Blochmanniella pennsylvanica (strain BPEN)</name>
    <dbReference type="NCBI Taxonomy" id="291272"/>
    <lineage>
        <taxon>Bacteria</taxon>
        <taxon>Pseudomonadati</taxon>
        <taxon>Pseudomonadota</taxon>
        <taxon>Gammaproteobacteria</taxon>
        <taxon>Enterobacterales</taxon>
        <taxon>Enterobacteriaceae</taxon>
        <taxon>ant endosymbionts</taxon>
        <taxon>Candidatus Blochmanniella</taxon>
    </lineage>
</organism>
<evidence type="ECO:0000255" key="1">
    <source>
        <dbReference type="HAMAP-Rule" id="MF_00607"/>
    </source>
</evidence>
<name>RSMA_BLOPB</name>
<keyword id="KW-0963">Cytoplasm</keyword>
<keyword id="KW-0489">Methyltransferase</keyword>
<keyword id="KW-1185">Reference proteome</keyword>
<keyword id="KW-0694">RNA-binding</keyword>
<keyword id="KW-0698">rRNA processing</keyword>
<keyword id="KW-0949">S-adenosyl-L-methionine</keyword>
<keyword id="KW-0808">Transferase</keyword>
<protein>
    <recommendedName>
        <fullName evidence="1">Ribosomal RNA small subunit methyltransferase A</fullName>
        <ecNumber evidence="1">2.1.1.182</ecNumber>
    </recommendedName>
    <alternativeName>
        <fullName evidence="1">16S rRNA (adenine(1518)-N(6)/adenine(1519)-N(6))-dimethyltransferase</fullName>
    </alternativeName>
    <alternativeName>
        <fullName evidence="1">16S rRNA dimethyladenosine transferase</fullName>
    </alternativeName>
    <alternativeName>
        <fullName evidence="1">16S rRNA dimethylase</fullName>
    </alternativeName>
    <alternativeName>
        <fullName evidence="1">S-adenosylmethionine-6-N', N'-adenosyl(rRNA) dimethyltransferase</fullName>
    </alternativeName>
</protein>
<reference key="1">
    <citation type="journal article" date="2005" name="Genome Res.">
        <title>Genome sequence of Blochmannia pennsylvanicus indicates parallel evolutionary trends among bacterial mutualists of insects.</title>
        <authorList>
            <person name="Degnan P.H."/>
            <person name="Lazarus A.B."/>
            <person name="Wernegreen J.J."/>
        </authorList>
    </citation>
    <scope>NUCLEOTIDE SEQUENCE [LARGE SCALE GENOMIC DNA]</scope>
    <source>
        <strain>BPEN</strain>
    </source>
</reference>
<comment type="function">
    <text evidence="1">Specifically dimethylates two adjacent adenosines (A1518 and A1519) in the loop of a conserved hairpin near the 3'-end of 16S rRNA in the 30S particle. May play a critical role in biogenesis of 30S subunits.</text>
</comment>
<comment type="catalytic activity">
    <reaction evidence="1">
        <text>adenosine(1518)/adenosine(1519) in 16S rRNA + 4 S-adenosyl-L-methionine = N(6)-dimethyladenosine(1518)/N(6)-dimethyladenosine(1519) in 16S rRNA + 4 S-adenosyl-L-homocysteine + 4 H(+)</text>
        <dbReference type="Rhea" id="RHEA:19609"/>
        <dbReference type="Rhea" id="RHEA-COMP:10232"/>
        <dbReference type="Rhea" id="RHEA-COMP:10233"/>
        <dbReference type="ChEBI" id="CHEBI:15378"/>
        <dbReference type="ChEBI" id="CHEBI:57856"/>
        <dbReference type="ChEBI" id="CHEBI:59789"/>
        <dbReference type="ChEBI" id="CHEBI:74411"/>
        <dbReference type="ChEBI" id="CHEBI:74493"/>
        <dbReference type="EC" id="2.1.1.182"/>
    </reaction>
</comment>
<comment type="subcellular location">
    <subcellularLocation>
        <location evidence="1">Cytoplasm</location>
    </subcellularLocation>
</comment>
<comment type="similarity">
    <text evidence="1">Belongs to the class I-like SAM-binding methyltransferase superfamily. rRNA adenine N(6)-methyltransferase family. RsmA subfamily.</text>
</comment>
<proteinExistence type="inferred from homology"/>